<protein>
    <recommendedName>
        <fullName evidence="1">Cell division protein ZipA</fullName>
    </recommendedName>
</protein>
<proteinExistence type="inferred from homology"/>
<organism>
    <name type="scientific">Baumannia cicadellinicola subsp. Homalodisca coagulata</name>
    <dbReference type="NCBI Taxonomy" id="374463"/>
    <lineage>
        <taxon>Bacteria</taxon>
        <taxon>Pseudomonadati</taxon>
        <taxon>Pseudomonadota</taxon>
        <taxon>Gammaproteobacteria</taxon>
        <taxon>Candidatus Palibaumannia</taxon>
    </lineage>
</organism>
<feature type="chain" id="PRO_0000258586" description="Cell division protein ZipA">
    <location>
        <begin position="1"/>
        <end position="256"/>
    </location>
</feature>
<feature type="topological domain" description="Periplasmic" evidence="1">
    <location>
        <begin position="1"/>
        <end position="6"/>
    </location>
</feature>
<feature type="transmembrane region" description="Helical" evidence="1">
    <location>
        <begin position="7"/>
        <end position="27"/>
    </location>
</feature>
<feature type="topological domain" description="Cytoplasmic" evidence="1">
    <location>
        <begin position="28"/>
        <end position="256"/>
    </location>
</feature>
<dbReference type="EMBL" id="CP000238">
    <property type="protein sequence ID" value="ABF14123.1"/>
    <property type="status" value="ALT_INIT"/>
    <property type="molecule type" value="Genomic_DNA"/>
</dbReference>
<dbReference type="SMR" id="Q1LU19"/>
<dbReference type="STRING" id="374463.BCI_0067"/>
<dbReference type="KEGG" id="bci:BCI_0067"/>
<dbReference type="HOGENOM" id="CLU_1033125_0_0_6"/>
<dbReference type="Proteomes" id="UP000002427">
    <property type="component" value="Chromosome"/>
</dbReference>
<dbReference type="GO" id="GO:0032153">
    <property type="term" value="C:cell division site"/>
    <property type="evidence" value="ECO:0007669"/>
    <property type="project" value="UniProtKB-UniRule"/>
</dbReference>
<dbReference type="GO" id="GO:0005886">
    <property type="term" value="C:plasma membrane"/>
    <property type="evidence" value="ECO:0007669"/>
    <property type="project" value="UniProtKB-SubCell"/>
</dbReference>
<dbReference type="GO" id="GO:0000917">
    <property type="term" value="P:division septum assembly"/>
    <property type="evidence" value="ECO:0007669"/>
    <property type="project" value="TreeGrafter"/>
</dbReference>
<dbReference type="GO" id="GO:0043093">
    <property type="term" value="P:FtsZ-dependent cytokinesis"/>
    <property type="evidence" value="ECO:0007669"/>
    <property type="project" value="UniProtKB-UniRule"/>
</dbReference>
<dbReference type="Gene3D" id="3.30.1400.10">
    <property type="entry name" value="ZipA, C-terminal FtsZ-binding domain"/>
    <property type="match status" value="1"/>
</dbReference>
<dbReference type="HAMAP" id="MF_00509">
    <property type="entry name" value="ZipA"/>
    <property type="match status" value="1"/>
</dbReference>
<dbReference type="InterPro" id="IPR011919">
    <property type="entry name" value="Cell_div_ZipA"/>
</dbReference>
<dbReference type="InterPro" id="IPR007449">
    <property type="entry name" value="ZipA_FtsZ-bd_C"/>
</dbReference>
<dbReference type="InterPro" id="IPR036765">
    <property type="entry name" value="ZipA_FtsZ-bd_C_sf"/>
</dbReference>
<dbReference type="NCBIfam" id="TIGR02205">
    <property type="entry name" value="septum_zipA"/>
    <property type="match status" value="1"/>
</dbReference>
<dbReference type="PANTHER" id="PTHR38685">
    <property type="entry name" value="CELL DIVISION PROTEIN ZIPA"/>
    <property type="match status" value="1"/>
</dbReference>
<dbReference type="PANTHER" id="PTHR38685:SF1">
    <property type="entry name" value="CELL DIVISION PROTEIN ZIPA"/>
    <property type="match status" value="1"/>
</dbReference>
<dbReference type="Pfam" id="PF04354">
    <property type="entry name" value="ZipA_C"/>
    <property type="match status" value="1"/>
</dbReference>
<dbReference type="SMART" id="SM00771">
    <property type="entry name" value="ZipA_C"/>
    <property type="match status" value="1"/>
</dbReference>
<dbReference type="SUPFAM" id="SSF64383">
    <property type="entry name" value="Cell-division protein ZipA, C-terminal domain"/>
    <property type="match status" value="1"/>
</dbReference>
<keyword id="KW-0131">Cell cycle</keyword>
<keyword id="KW-0132">Cell division</keyword>
<keyword id="KW-0997">Cell inner membrane</keyword>
<keyword id="KW-1003">Cell membrane</keyword>
<keyword id="KW-0472">Membrane</keyword>
<keyword id="KW-1185">Reference proteome</keyword>
<keyword id="KW-0812">Transmembrane</keyword>
<keyword id="KW-1133">Transmembrane helix</keyword>
<reference key="1">
    <citation type="journal article" date="2006" name="PLoS Biol.">
        <title>Metabolic complementarity and genomics of the dual bacterial symbiosis of sharpshooters.</title>
        <authorList>
            <person name="Wu D."/>
            <person name="Daugherty S.C."/>
            <person name="Van Aken S.E."/>
            <person name="Pai G.H."/>
            <person name="Watkins K.L."/>
            <person name="Khouri H."/>
            <person name="Tallon L.J."/>
            <person name="Zaborsky J.M."/>
            <person name="Dunbar H.E."/>
            <person name="Tran P.L."/>
            <person name="Moran N.A."/>
            <person name="Eisen J.A."/>
        </authorList>
    </citation>
    <scope>NUCLEOTIDE SEQUENCE [LARGE SCALE GENOMIC DNA]</scope>
</reference>
<gene>
    <name evidence="1" type="primary">zipA</name>
    <name type="ordered locus">BCI_0067</name>
</gene>
<comment type="function">
    <text evidence="1">Essential cell division protein that stabilizes the FtsZ protofilaments by cross-linking them and that serves as a cytoplasmic membrane anchor for the Z ring. Also required for the recruitment to the septal ring of downstream cell division proteins.</text>
</comment>
<comment type="subunit">
    <text evidence="1">Interacts with FtsZ via their C-terminal domains.</text>
</comment>
<comment type="subcellular location">
    <subcellularLocation>
        <location evidence="1">Cell inner membrane</location>
        <topology evidence="1">Single-pass type I membrane protein</topology>
    </subcellularLocation>
    <text evidence="1">Localizes to the Z ring in an FtsZ-dependent manner.</text>
</comment>
<comment type="similarity">
    <text evidence="1">Belongs to the ZipA family.</text>
</comment>
<comment type="sequence caution" evidence="2">
    <conflict type="erroneous initiation">
        <sequence resource="EMBL-CDS" id="ABF14123"/>
    </conflict>
</comment>
<accession>Q1LU19</accession>
<sequence>MQYGRQILICIGILTVIILLLYGLLNSYWDRTVTFCKVRFNQLKNKFISQPLLSDHKENIAVSHIYKNDLFENNDIEYDPLLSKREADSYIIPSNNLACDNISAHKHIPLNNPKEIVLVLHVAAYNGTVLYGDSLWQSLLQTGLQFGEMNIFHRHLNPTGSGPVLFSLANMIKPGWFRFNSKNIATFTTPGVSMFMIIPSYGDANHNFKLMLQAAQQIADNCGGVVLDEEHHMLTPQKLDIYKARIRHVLSANKST</sequence>
<evidence type="ECO:0000255" key="1">
    <source>
        <dbReference type="HAMAP-Rule" id="MF_00509"/>
    </source>
</evidence>
<evidence type="ECO:0000305" key="2"/>
<name>ZIPA_BAUCH</name>